<accession>Q62770</accession>
<comment type="function">
    <text evidence="1">May play a role in vesicle maturation during exocytosis as a target of the diacylglycerol second messenger pathway. May be involved in the regulation of synaptic transmission at parallel fiber - Purkinje cell synapses (By similarity).</text>
</comment>
<comment type="cofactor">
    <cofactor evidence="4">
        <name>Ca(2+)</name>
        <dbReference type="ChEBI" id="CHEBI:29108"/>
    </cofactor>
</comment>
<comment type="subunit">
    <text evidence="10">Interacts with STX1A and/or STX1B1, VAMP2 and SNAP25.</text>
</comment>
<comment type="subcellular location">
    <subcellularLocation>
        <location evidence="12">Cytoplasm</location>
    </subcellularLocation>
    <subcellularLocation>
        <location evidence="12">Membrane</location>
        <topology evidence="12">Peripheral membrane protein</topology>
    </subcellularLocation>
    <subcellularLocation>
        <location evidence="12">Presynaptic cell membrane</location>
        <topology evidence="12">Peripheral membrane protein</topology>
    </subcellularLocation>
    <text evidence="11">Localized to presynaptic structures.</text>
</comment>
<comment type="tissue specificity">
    <text evidence="9 10">Exclusively expressed in brain, predominantly in the cerebellum.</text>
</comment>
<comment type="developmental stage">
    <text evidence="10">First detected at birth, after which expression level is steadily increasing until it reaches a plateau at P15.</text>
</comment>
<comment type="domain">
    <text>The C2 domains are not involved in calcium-dependent phospholipid binding.</text>
</comment>
<comment type="similarity">
    <text evidence="11">Belongs to the unc-13 family.</text>
</comment>
<comment type="sequence caution" evidence="11">
    <conflict type="erroneous initiation">
        <sequence resource="EMBL-CDS" id="AAB39720"/>
    </conflict>
</comment>
<dbReference type="EMBL" id="U75361">
    <property type="protein sequence ID" value="AAB39720.1"/>
    <property type="status" value="ALT_INIT"/>
    <property type="molecule type" value="mRNA"/>
</dbReference>
<dbReference type="PIR" id="T42759">
    <property type="entry name" value="T42759"/>
</dbReference>
<dbReference type="RefSeq" id="NP_775169.4">
    <property type="nucleotide sequence ID" value="NM_173146.2"/>
</dbReference>
<dbReference type="SMR" id="Q62770"/>
<dbReference type="FunCoup" id="Q62770">
    <property type="interactions" value="266"/>
</dbReference>
<dbReference type="STRING" id="10116.ENSRNOP00000075433"/>
<dbReference type="iPTMnet" id="Q62770"/>
<dbReference type="PhosphoSitePlus" id="Q62770"/>
<dbReference type="PaxDb" id="10116-ENSRNOP00000010330"/>
<dbReference type="GeneID" id="286931"/>
<dbReference type="KEGG" id="rno:286931"/>
<dbReference type="UCSC" id="RGD:628592">
    <property type="organism name" value="rat"/>
</dbReference>
<dbReference type="AGR" id="RGD:628592"/>
<dbReference type="CTD" id="440279"/>
<dbReference type="RGD" id="628592">
    <property type="gene designation" value="Unc13c"/>
</dbReference>
<dbReference type="eggNOG" id="KOG1011">
    <property type="taxonomic scope" value="Eukaryota"/>
</dbReference>
<dbReference type="InParanoid" id="Q62770"/>
<dbReference type="PhylomeDB" id="Q62770"/>
<dbReference type="PRO" id="PR:Q62770"/>
<dbReference type="Proteomes" id="UP000002494">
    <property type="component" value="Unplaced"/>
</dbReference>
<dbReference type="GO" id="GO:0044305">
    <property type="term" value="C:calyx of Held"/>
    <property type="evidence" value="ECO:0000266"/>
    <property type="project" value="RGD"/>
</dbReference>
<dbReference type="GO" id="GO:0031594">
    <property type="term" value="C:neuromuscular junction"/>
    <property type="evidence" value="ECO:0000318"/>
    <property type="project" value="GO_Central"/>
</dbReference>
<dbReference type="GO" id="GO:0098688">
    <property type="term" value="C:parallel fiber to Purkinje cell synapse"/>
    <property type="evidence" value="ECO:0000266"/>
    <property type="project" value="RGD"/>
</dbReference>
<dbReference type="GO" id="GO:0005886">
    <property type="term" value="C:plasma membrane"/>
    <property type="evidence" value="ECO:0000318"/>
    <property type="project" value="GO_Central"/>
</dbReference>
<dbReference type="GO" id="GO:0098793">
    <property type="term" value="C:presynapse"/>
    <property type="evidence" value="ECO:0000266"/>
    <property type="project" value="RGD"/>
</dbReference>
<dbReference type="GO" id="GO:0042734">
    <property type="term" value="C:presynaptic membrane"/>
    <property type="evidence" value="ECO:0000318"/>
    <property type="project" value="GO_Central"/>
</dbReference>
<dbReference type="GO" id="GO:0030672">
    <property type="term" value="C:synaptic vesicle membrane"/>
    <property type="evidence" value="ECO:0000314"/>
    <property type="project" value="ParkinsonsUK-UCL"/>
</dbReference>
<dbReference type="GO" id="GO:0043195">
    <property type="term" value="C:terminal bouton"/>
    <property type="evidence" value="ECO:0000318"/>
    <property type="project" value="GO_Central"/>
</dbReference>
<dbReference type="GO" id="GO:0005509">
    <property type="term" value="F:calcium ion binding"/>
    <property type="evidence" value="ECO:0007669"/>
    <property type="project" value="InterPro"/>
</dbReference>
<dbReference type="GO" id="GO:0005516">
    <property type="term" value="F:calmodulin binding"/>
    <property type="evidence" value="ECO:0000314"/>
    <property type="project" value="ParkinsonsUK-UCL"/>
</dbReference>
<dbReference type="GO" id="GO:0019992">
    <property type="term" value="F:diacylglycerol binding"/>
    <property type="evidence" value="ECO:0007669"/>
    <property type="project" value="InterPro"/>
</dbReference>
<dbReference type="GO" id="GO:0005543">
    <property type="term" value="F:phospholipid binding"/>
    <property type="evidence" value="ECO:0007669"/>
    <property type="project" value="InterPro"/>
</dbReference>
<dbReference type="GO" id="GO:0019905">
    <property type="term" value="F:syntaxin binding"/>
    <property type="evidence" value="ECO:0000314"/>
    <property type="project" value="ParkinsonsUK-UCL"/>
</dbReference>
<dbReference type="GO" id="GO:0017075">
    <property type="term" value="F:syntaxin-1 binding"/>
    <property type="evidence" value="ECO:0000314"/>
    <property type="project" value="ParkinsonsUK-UCL"/>
</dbReference>
<dbReference type="GO" id="GO:0008270">
    <property type="term" value="F:zinc ion binding"/>
    <property type="evidence" value="ECO:0007669"/>
    <property type="project" value="UniProtKB-KW"/>
</dbReference>
<dbReference type="GO" id="GO:0007268">
    <property type="term" value="P:chemical synaptic transmission"/>
    <property type="evidence" value="ECO:0000250"/>
    <property type="project" value="ParkinsonsUK-UCL"/>
</dbReference>
<dbReference type="GO" id="GO:0061789">
    <property type="term" value="P:dense core granule priming"/>
    <property type="evidence" value="ECO:0000318"/>
    <property type="project" value="GO_Central"/>
</dbReference>
<dbReference type="GO" id="GO:0031914">
    <property type="term" value="P:negative regulation of synaptic plasticity"/>
    <property type="evidence" value="ECO:0000266"/>
    <property type="project" value="RGD"/>
</dbReference>
<dbReference type="GO" id="GO:0046928">
    <property type="term" value="P:regulation of neurotransmitter secretion"/>
    <property type="evidence" value="ECO:0000304"/>
    <property type="project" value="RGD"/>
</dbReference>
<dbReference type="GO" id="GO:0035249">
    <property type="term" value="P:synaptic transmission, glutamatergic"/>
    <property type="evidence" value="ECO:0000318"/>
    <property type="project" value="GO_Central"/>
</dbReference>
<dbReference type="GO" id="GO:0016081">
    <property type="term" value="P:synaptic vesicle docking"/>
    <property type="evidence" value="ECO:0000318"/>
    <property type="project" value="GO_Central"/>
</dbReference>
<dbReference type="GO" id="GO:0016079">
    <property type="term" value="P:synaptic vesicle exocytosis"/>
    <property type="evidence" value="ECO:0000266"/>
    <property type="project" value="RGD"/>
</dbReference>
<dbReference type="GO" id="GO:0016082">
    <property type="term" value="P:synaptic vesicle priming"/>
    <property type="evidence" value="ECO:0000315"/>
    <property type="project" value="ParkinsonsUK-UCL"/>
</dbReference>
<dbReference type="CDD" id="cd20859">
    <property type="entry name" value="C1_Munc13-2-like"/>
    <property type="match status" value="1"/>
</dbReference>
<dbReference type="CDD" id="cd04027">
    <property type="entry name" value="C2B_Munc13"/>
    <property type="match status" value="1"/>
</dbReference>
<dbReference type="CDD" id="cd08395">
    <property type="entry name" value="C2C_Munc13"/>
    <property type="match status" value="1"/>
</dbReference>
<dbReference type="FunFam" id="1.10.357.50:FF:000001">
    <property type="entry name" value="Protein unc-13 homolog B"/>
    <property type="match status" value="1"/>
</dbReference>
<dbReference type="FunFam" id="1.20.58.1100:FF:000001">
    <property type="entry name" value="Protein unc-13 homolog B"/>
    <property type="match status" value="1"/>
</dbReference>
<dbReference type="FunFam" id="2.60.40.150:FF:000002">
    <property type="entry name" value="Protein unc-13 homolog B"/>
    <property type="match status" value="1"/>
</dbReference>
<dbReference type="FunFam" id="3.30.60.20:FF:000001">
    <property type="entry name" value="Protein unc-13 homolog B"/>
    <property type="match status" value="1"/>
</dbReference>
<dbReference type="FunFam" id="2.60.40.150:FF:000014">
    <property type="entry name" value="protein unc-13 homolog B"/>
    <property type="match status" value="1"/>
</dbReference>
<dbReference type="FunFam" id="3.30.70.1820:FF:000003">
    <property type="entry name" value="Protein unc-13 homolog C"/>
    <property type="match status" value="1"/>
</dbReference>
<dbReference type="Gene3D" id="1.10.357.50">
    <property type="match status" value="1"/>
</dbReference>
<dbReference type="Gene3D" id="1.20.58.1100">
    <property type="match status" value="1"/>
</dbReference>
<dbReference type="Gene3D" id="3.30.60.20">
    <property type="match status" value="1"/>
</dbReference>
<dbReference type="Gene3D" id="2.60.40.150">
    <property type="entry name" value="C2 domain"/>
    <property type="match status" value="2"/>
</dbReference>
<dbReference type="Gene3D" id="3.30.70.1820">
    <property type="entry name" value="L1 transposable element, RRM domain"/>
    <property type="match status" value="1"/>
</dbReference>
<dbReference type="InterPro" id="IPR046349">
    <property type="entry name" value="C1-like_sf"/>
</dbReference>
<dbReference type="InterPro" id="IPR000008">
    <property type="entry name" value="C2_dom"/>
</dbReference>
<dbReference type="InterPro" id="IPR035892">
    <property type="entry name" value="C2_domain_sf"/>
</dbReference>
<dbReference type="InterPro" id="IPR010439">
    <property type="entry name" value="MUN_dom"/>
</dbReference>
<dbReference type="InterPro" id="IPR014770">
    <property type="entry name" value="Munc13_1"/>
</dbReference>
<dbReference type="InterPro" id="IPR014772">
    <property type="entry name" value="Munc13_dom-2"/>
</dbReference>
<dbReference type="InterPro" id="IPR002219">
    <property type="entry name" value="PE/DAG-bd"/>
</dbReference>
<dbReference type="InterPro" id="IPR027080">
    <property type="entry name" value="Unc-13"/>
</dbReference>
<dbReference type="InterPro" id="IPR037302">
    <property type="entry name" value="Unc-13_C2B"/>
</dbReference>
<dbReference type="PANTHER" id="PTHR10480">
    <property type="entry name" value="PROTEIN UNC-13 HOMOLOG"/>
    <property type="match status" value="1"/>
</dbReference>
<dbReference type="PANTHER" id="PTHR10480:SF2">
    <property type="entry name" value="PROTEIN UNC-13 HOMOLOG C"/>
    <property type="match status" value="1"/>
</dbReference>
<dbReference type="Pfam" id="PF00130">
    <property type="entry name" value="C1_1"/>
    <property type="match status" value="1"/>
</dbReference>
<dbReference type="Pfam" id="PF00168">
    <property type="entry name" value="C2"/>
    <property type="match status" value="2"/>
</dbReference>
<dbReference type="Pfam" id="PF06292">
    <property type="entry name" value="MUN"/>
    <property type="match status" value="1"/>
</dbReference>
<dbReference type="PRINTS" id="PR00360">
    <property type="entry name" value="C2DOMAIN"/>
</dbReference>
<dbReference type="SMART" id="SM00109">
    <property type="entry name" value="C1"/>
    <property type="match status" value="1"/>
</dbReference>
<dbReference type="SMART" id="SM00239">
    <property type="entry name" value="C2"/>
    <property type="match status" value="2"/>
</dbReference>
<dbReference type="SMART" id="SM01145">
    <property type="entry name" value="DUF1041"/>
    <property type="match status" value="1"/>
</dbReference>
<dbReference type="SUPFAM" id="SSF49562">
    <property type="entry name" value="C2 domain (Calcium/lipid-binding domain, CaLB)"/>
    <property type="match status" value="2"/>
</dbReference>
<dbReference type="SUPFAM" id="SSF57889">
    <property type="entry name" value="Cysteine-rich domain"/>
    <property type="match status" value="1"/>
</dbReference>
<dbReference type="PROSITE" id="PS50004">
    <property type="entry name" value="C2"/>
    <property type="match status" value="2"/>
</dbReference>
<dbReference type="PROSITE" id="PS51258">
    <property type="entry name" value="MHD1"/>
    <property type="match status" value="1"/>
</dbReference>
<dbReference type="PROSITE" id="PS51259">
    <property type="entry name" value="MHD2"/>
    <property type="match status" value="1"/>
</dbReference>
<dbReference type="PROSITE" id="PS00479">
    <property type="entry name" value="ZF_DAG_PE_1"/>
    <property type="match status" value="1"/>
</dbReference>
<dbReference type="PROSITE" id="PS50081">
    <property type="entry name" value="ZF_DAG_PE_2"/>
    <property type="match status" value="1"/>
</dbReference>
<sequence length="2204" mass="249136">MVASLFKSLILAYIHKLCKGMFTKKLGNTTKKKENRQQNKDQDFPTAGHTKPPKLSNALKSTVKKIAKCSSTRNFSVEDEEGHKDFSLSPTFSYRVAIANGLQTAVTNSDEDLLQELSSIESSYSESFNELRSSTENQVQSTHTMPVRRNRKSSSSLAPSEGSSDGERTLHTLKLGALRKLRKWKKSQECVSSDSELSTVKKTWGIRSKSLDRTARNPKTNVLEPGFSSSGCISQTHDVMEMIFKELQGISQIETELSELRGHVNALKYSIDEISSSVEVVQSEIEQLRTGFVQARRETRDIHDYIKHLGHMGSKVSLRFLNVPEERHEYVESVVYQILVDKMGFSDVPNAIKIEFAQRIGQQRDCPNAKPRPILVYFETPQQRDSVLKKSYKLKGTGIAISTDILTYDIRERKEKGVLPSSQTYESMDMKLSTPEPKAKKNAWLSPNDSDRELESDLSRSSYADSPAKGSSSKSSSKSHSARSKNKAANSRTSQKSDYNKRPSKPPASEKPTPHYVEATPLWHSQSDFFTPKLSRSESDFSKLCQSYSEDFSESQFFCRTNGSSLLSSSDRELWQRKQEGMTALYHSPQDQGLDGNIPTVPGQGEIENTETVDSGMSNSVVCASGDRSNYSGSQLSLHEDLSPWKEWNQAGHGTDGLDSSTQEPFDYDTNSLSDQQLDMSSKDLDDLGKCHSDLQDDSESYDLTQDDNSSPCPGLDNEPQGQWVGQYDSYQKTNSNDLYPNQSHPSMMYRSQSELQSDDSEAAQPKSWHSRLSIDLSDKTFKFPKFGSTLQRAKSALEVVWNKSTQSLSGCEDSGSSLMGRFRTLSQSTANESSTTLDSDIYTEPYYYKAEEEEDYCEPVADSETDYVEVMEQVLAKLENRTSVTEVDEHIKEYDHPSYETPYETPQDEGYDGQADDIISEGELETLNEPAVEMELVEDESQNLPVEPPEVMKPKRIRPSFKEAALRAYKKQMAELEEKILAGDSSSVDEKARIVSGNDLDASKFSALQVFGGAGRGLYGIDSMPDLRRKKTLPIVRDVAMTLAARKSGLSLAMVIRTSLNNEELKMHVFRKTLQALIYPISSTTPHNFEVWTATTPTYCYECEGLLWGIARQGMKCLECGVKCHEKCQDLLNADCLQRAAEKSSKHGAEDKTQTIITAMKERMKIRERNRPEVFEVIQEMFQISKEDFVQYTKAAKQSVLDGTSKWSAKITITVVSAQGLQAKDKTGSSDPYVTVQVGKNKRRTKTIFGNLNPVWDEKFYFECHNSTDRIKVRVWDEDDDIKSRVKQHFKKESDDFLGQTIVEVRTLSGEMDVWYNLEKRTDKSAVSGAIRLKINVEIKGEEKVAPYHIQYTCLHENLFHYLTEVKSNGSVKIPEVKGDEAWKVFFDDASQEIVDEFAMRYGVESIYQAMTHFSCLSSKYMCPGVPAVMSALLANINAFYAHTTVSTNVQVSASDRFAATNFGREKFIKLLDQLHNSLRIDLSKYRENFPASNSERLQDLKSTVDLLTSITFFRMKVLELQSPPKASAVVKDCVRACLDSTYKYIFDNCHELYSQLIDPSKKQDVPREEQGPTTKNLDFWPQLITLMVTIIDEDKTAYTPVLNQFPQELNMGKISAEIMWSLFALDMKYALEEHEKQRLCKSTDYMNLHFKVKWFYNEYVRELPAFKDAVPEYSLWFEPFVMQWLDENEDVSMEFLHGALGRDKKDGFQQTSDHALFSCSVVDVFAQLNQSFEIIKKLECPNPEALSHLMRRFAKTINKVLVQYAAIVSSDFSSYCDKETVPCILMNNIQQLRVQLEKMFESMGGKELDPEASTILKELQIKLNGVLDALSVTYGESFQLVIEECIKQMGAELNQMRANGNSAANKNNAAMDAEIVLRPLMDFLDKILSLSAKICEKTVLKRVLKELWKLVLNKIEKQIVLPPLTDQTGPQMIFIAAKELGQLSKLKEHMIRDDAKGLTPRQCAIMEVVLATIKQYFHAGGNGLKKNFLEKSPDLHSLRYALSLYTQTTDALIKKFIETQGSQSRSSKDAVGQISVHVDVTTTPGTGEHKVTVKVIAINDLNWQTTTMFRPFVEVCMLGPSLGDKKRKQGTKTKSNTWSPKYNETFQFILGNENRPGAYELHLSVKDYCFAREDRIIGMTVIQLQNIAEKGSYGAWYPLLKNLSMDETGLTILRILSQRTSDDVAKEFVRLKSETRSIDESA</sequence>
<proteinExistence type="evidence at protein level"/>
<protein>
    <recommendedName>
        <fullName>Protein unc-13 homolog C</fullName>
    </recommendedName>
    <alternativeName>
        <fullName>Munc13-3</fullName>
    </alternativeName>
</protein>
<gene>
    <name type="primary">Unc13c</name>
    <name type="synonym">Unc13h3</name>
</gene>
<evidence type="ECO:0000250" key="1"/>
<evidence type="ECO:0000250" key="2">
    <source>
        <dbReference type="UniProtKB" id="Q8K0T7"/>
    </source>
</evidence>
<evidence type="ECO:0000255" key="3"/>
<evidence type="ECO:0000255" key="4">
    <source>
        <dbReference type="PROSITE-ProRule" id="PRU00041"/>
    </source>
</evidence>
<evidence type="ECO:0000255" key="5">
    <source>
        <dbReference type="PROSITE-ProRule" id="PRU00226"/>
    </source>
</evidence>
<evidence type="ECO:0000255" key="6">
    <source>
        <dbReference type="PROSITE-ProRule" id="PRU00587"/>
    </source>
</evidence>
<evidence type="ECO:0000255" key="7">
    <source>
        <dbReference type="PROSITE-ProRule" id="PRU00588"/>
    </source>
</evidence>
<evidence type="ECO:0000256" key="8">
    <source>
        <dbReference type="SAM" id="MobiDB-lite"/>
    </source>
</evidence>
<evidence type="ECO:0000269" key="9">
    <source>
    </source>
</evidence>
<evidence type="ECO:0000269" key="10">
    <source>
    </source>
</evidence>
<evidence type="ECO:0000305" key="11"/>
<evidence type="ECO:0000305" key="12">
    <source>
    </source>
</evidence>
<evidence type="ECO:0007744" key="13">
    <source>
    </source>
</evidence>
<name>UN13C_RAT</name>
<feature type="chain" id="PRO_0000188580" description="Protein unc-13 homolog C">
    <location>
        <begin position="1"/>
        <end position="2204"/>
    </location>
</feature>
<feature type="domain" description="C2 1" evidence="4">
    <location>
        <begin position="1193"/>
        <end position="1317"/>
    </location>
</feature>
<feature type="domain" description="MHD1" evidence="6">
    <location>
        <begin position="1627"/>
        <end position="1770"/>
    </location>
</feature>
<feature type="domain" description="MHD2" evidence="7">
    <location>
        <begin position="1876"/>
        <end position="2018"/>
    </location>
</feature>
<feature type="domain" description="C2 2" evidence="4">
    <location>
        <begin position="2032"/>
        <end position="2159"/>
    </location>
</feature>
<feature type="zinc finger region" description="Phorbol-ester/DAG-type" evidence="5">
    <location>
        <begin position="1087"/>
        <end position="1137"/>
    </location>
</feature>
<feature type="region of interest" description="Disordered" evidence="8">
    <location>
        <begin position="28"/>
        <end position="55"/>
    </location>
</feature>
<feature type="region of interest" description="Disordered" evidence="8">
    <location>
        <begin position="128"/>
        <end position="169"/>
    </location>
</feature>
<feature type="region of interest" description="Disordered" evidence="8">
    <location>
        <begin position="419"/>
        <end position="515"/>
    </location>
</feature>
<feature type="region of interest" description="Disordered" evidence="8">
    <location>
        <begin position="587"/>
        <end position="635"/>
    </location>
</feature>
<feature type="region of interest" description="Disordered" evidence="8">
    <location>
        <begin position="647"/>
        <end position="770"/>
    </location>
</feature>
<feature type="coiled-coil region" evidence="3">
    <location>
        <begin position="961"/>
        <end position="984"/>
    </location>
</feature>
<feature type="compositionally biased region" description="Basic and acidic residues" evidence="8">
    <location>
        <begin position="31"/>
        <end position="43"/>
    </location>
</feature>
<feature type="compositionally biased region" description="Polar residues" evidence="8">
    <location>
        <begin position="128"/>
        <end position="144"/>
    </location>
</feature>
<feature type="compositionally biased region" description="Low complexity" evidence="8">
    <location>
        <begin position="153"/>
        <end position="163"/>
    </location>
</feature>
<feature type="compositionally biased region" description="Basic and acidic residues" evidence="8">
    <location>
        <begin position="449"/>
        <end position="458"/>
    </location>
</feature>
<feature type="compositionally biased region" description="Low complexity" evidence="8">
    <location>
        <begin position="464"/>
        <end position="479"/>
    </location>
</feature>
<feature type="compositionally biased region" description="Polar residues" evidence="8">
    <location>
        <begin position="610"/>
        <end position="635"/>
    </location>
</feature>
<feature type="compositionally biased region" description="Polar residues" evidence="8">
    <location>
        <begin position="658"/>
        <end position="680"/>
    </location>
</feature>
<feature type="compositionally biased region" description="Basic and acidic residues" evidence="8">
    <location>
        <begin position="681"/>
        <end position="695"/>
    </location>
</feature>
<feature type="compositionally biased region" description="Polar residues" evidence="8">
    <location>
        <begin position="702"/>
        <end position="712"/>
    </location>
</feature>
<feature type="compositionally biased region" description="Polar residues" evidence="8">
    <location>
        <begin position="729"/>
        <end position="756"/>
    </location>
</feature>
<feature type="binding site" evidence="4">
    <location>
        <position position="1226"/>
    </location>
    <ligand>
        <name>Ca(2+)</name>
        <dbReference type="ChEBI" id="CHEBI:29108"/>
        <label>1</label>
    </ligand>
</feature>
<feature type="binding site" evidence="4">
    <location>
        <position position="1226"/>
    </location>
    <ligand>
        <name>Ca(2+)</name>
        <dbReference type="ChEBI" id="CHEBI:29108"/>
        <label>2</label>
    </ligand>
</feature>
<feature type="binding site" evidence="4">
    <location>
        <position position="1232"/>
    </location>
    <ligand>
        <name>Ca(2+)</name>
        <dbReference type="ChEBI" id="CHEBI:29108"/>
        <label>1</label>
    </ligand>
</feature>
<feature type="binding site" evidence="4">
    <location>
        <position position="1278"/>
    </location>
    <ligand>
        <name>Ca(2+)</name>
        <dbReference type="ChEBI" id="CHEBI:29108"/>
        <label>1</label>
    </ligand>
</feature>
<feature type="binding site" evidence="4">
    <location>
        <position position="1278"/>
    </location>
    <ligand>
        <name>Ca(2+)</name>
        <dbReference type="ChEBI" id="CHEBI:29108"/>
        <label>2</label>
    </ligand>
</feature>
<feature type="binding site" evidence="4">
    <location>
        <position position="1280"/>
    </location>
    <ligand>
        <name>Ca(2+)</name>
        <dbReference type="ChEBI" id="CHEBI:29108"/>
        <label>1</label>
    </ligand>
</feature>
<feature type="binding site" evidence="4">
    <location>
        <position position="1280"/>
    </location>
    <ligand>
        <name>Ca(2+)</name>
        <dbReference type="ChEBI" id="CHEBI:29108"/>
        <label>2</label>
    </ligand>
</feature>
<feature type="binding site" evidence="4">
    <location>
        <position position="1297"/>
    </location>
    <ligand>
        <name>Ca(2+)</name>
        <dbReference type="ChEBI" id="CHEBI:29108"/>
        <label>2</label>
    </ligand>
</feature>
<feature type="modified residue" description="Phosphoserine" evidence="13">
    <location>
        <position position="89"/>
    </location>
</feature>
<feature type="modified residue" description="Phosphoserine" evidence="13">
    <location>
        <position position="446"/>
    </location>
</feature>
<feature type="modified residue" description="Phosphoserine" evidence="13">
    <location>
        <position position="450"/>
    </location>
</feature>
<feature type="modified residue" description="Phosphoserine" evidence="13">
    <location>
        <position position="778"/>
    </location>
</feature>
<feature type="modified residue" description="Omega-N-methylarginine" evidence="2">
    <location>
        <position position="1017"/>
    </location>
</feature>
<keyword id="KW-0106">Calcium</keyword>
<keyword id="KW-1003">Cell membrane</keyword>
<keyword id="KW-0966">Cell projection</keyword>
<keyword id="KW-0175">Coiled coil</keyword>
<keyword id="KW-0963">Cytoplasm</keyword>
<keyword id="KW-0268">Exocytosis</keyword>
<keyword id="KW-0472">Membrane</keyword>
<keyword id="KW-0479">Metal-binding</keyword>
<keyword id="KW-0488">Methylation</keyword>
<keyword id="KW-0597">Phosphoprotein</keyword>
<keyword id="KW-1185">Reference proteome</keyword>
<keyword id="KW-0677">Repeat</keyword>
<keyword id="KW-0770">Synapse</keyword>
<keyword id="KW-0862">Zinc</keyword>
<keyword id="KW-0863">Zinc-finger</keyword>
<reference key="1">
    <citation type="submission" date="1996-10" db="EMBL/GenBank/DDBJ databases">
        <authorList>
            <person name="Telemenakis I."/>
            <person name="Brose N."/>
            <person name="Suedhof T.C."/>
        </authorList>
    </citation>
    <scope>NUCLEOTIDE SEQUENCE [MRNA]</scope>
    <source>
        <tissue>Brain</tissue>
    </source>
</reference>
<reference key="2">
    <citation type="journal article" date="1995" name="J. Biol. Chem.">
        <title>Mammalian homologues of Caenorhabditis elegans unc-13 gene define novel family of C2-domain proteins.</title>
        <authorList>
            <person name="Brose N."/>
            <person name="Hofmann K."/>
            <person name="Hata Y."/>
            <person name="Suedhof T.C."/>
        </authorList>
    </citation>
    <scope>NUCLEOTIDE SEQUENCE [MRNA] OF 942-1634</scope>
    <scope>TISSUE SPECIFICITY</scope>
    <source>
        <tissue>Brain</tissue>
    </source>
</reference>
<reference key="3">
    <citation type="journal article" date="1999" name="Biochem. J.">
        <title>Differential expression of two novel Munc13 proteins in rat brain.</title>
        <authorList>
            <person name="Augustin I."/>
            <person name="Betz A."/>
            <person name="Herrmann C."/>
            <person name="Jo T."/>
            <person name="Brose N."/>
        </authorList>
    </citation>
    <scope>SUBCELLULAR LOCATION</scope>
    <scope>TISSUE SPECIFICITY</scope>
    <scope>DEVELOPMENTAL STAGE</scope>
    <scope>INTERACTION WITH SYNTAXIN 1; VAMP2 AND SNAP25</scope>
</reference>
<reference key="4">
    <citation type="journal article" date="2012" name="Nat. Commun.">
        <title>Quantitative maps of protein phosphorylation sites across 14 different rat organs and tissues.</title>
        <authorList>
            <person name="Lundby A."/>
            <person name="Secher A."/>
            <person name="Lage K."/>
            <person name="Nordsborg N.B."/>
            <person name="Dmytriyev A."/>
            <person name="Lundby C."/>
            <person name="Olsen J.V."/>
        </authorList>
    </citation>
    <scope>PHOSPHORYLATION [LARGE SCALE ANALYSIS] AT SER-89; SER-446; SER-450 AND SER-778</scope>
    <scope>IDENTIFICATION BY MASS SPECTROMETRY [LARGE SCALE ANALYSIS]</scope>
</reference>
<organism>
    <name type="scientific">Rattus norvegicus</name>
    <name type="common">Rat</name>
    <dbReference type="NCBI Taxonomy" id="10116"/>
    <lineage>
        <taxon>Eukaryota</taxon>
        <taxon>Metazoa</taxon>
        <taxon>Chordata</taxon>
        <taxon>Craniata</taxon>
        <taxon>Vertebrata</taxon>
        <taxon>Euteleostomi</taxon>
        <taxon>Mammalia</taxon>
        <taxon>Eutheria</taxon>
        <taxon>Euarchontoglires</taxon>
        <taxon>Glires</taxon>
        <taxon>Rodentia</taxon>
        <taxon>Myomorpha</taxon>
        <taxon>Muroidea</taxon>
        <taxon>Muridae</taxon>
        <taxon>Murinae</taxon>
        <taxon>Rattus</taxon>
    </lineage>
</organism>